<dbReference type="EC" id="1.1.1.1"/>
<dbReference type="EMBL" id="X04672">
    <property type="protein sequence ID" value="CAA28377.1"/>
    <property type="molecule type" value="Genomic_DNA"/>
</dbReference>
<dbReference type="EMBL" id="CH480818">
    <property type="protein sequence ID" value="EDW51762.1"/>
    <property type="molecule type" value="Genomic_DNA"/>
</dbReference>
<dbReference type="EMBL" id="AF284480">
    <property type="protein sequence ID" value="AAG28713.1"/>
    <property type="molecule type" value="Genomic_DNA"/>
</dbReference>
<dbReference type="EMBL" id="AF284481">
    <property type="protein sequence ID" value="AAG28714.1"/>
    <property type="molecule type" value="Genomic_DNA"/>
</dbReference>
<dbReference type="PIR" id="S07439">
    <property type="entry name" value="S07439"/>
</dbReference>
<dbReference type="SMR" id="Q9GN94"/>
<dbReference type="STRING" id="7238.Q9GN94"/>
<dbReference type="EnsemblMetazoa" id="FBtr0198641">
    <property type="protein sequence ID" value="FBpp0197133"/>
    <property type="gene ID" value="FBgn0012780"/>
</dbReference>
<dbReference type="EnsemblMetazoa" id="XM_002035803.2">
    <property type="protein sequence ID" value="XP_002035839.1"/>
    <property type="gene ID" value="LOC6611292"/>
</dbReference>
<dbReference type="GeneID" id="6611292"/>
<dbReference type="KEGG" id="dse:6611292"/>
<dbReference type="HOGENOM" id="CLU_010194_2_16_1"/>
<dbReference type="OMA" id="WSKHWDS"/>
<dbReference type="OrthoDB" id="8358at7215"/>
<dbReference type="PhylomeDB" id="Q9GN94"/>
<dbReference type="ChiTaRS" id="Adh">
    <property type="organism name" value="fly"/>
</dbReference>
<dbReference type="Proteomes" id="UP000001292">
    <property type="component" value="Unassembled WGS sequence"/>
</dbReference>
<dbReference type="GO" id="GO:0005829">
    <property type="term" value="C:cytosol"/>
    <property type="evidence" value="ECO:0007669"/>
    <property type="project" value="EnsemblMetazoa"/>
</dbReference>
<dbReference type="GO" id="GO:0004022">
    <property type="term" value="F:alcohol dehydrogenase (NAD+) activity"/>
    <property type="evidence" value="ECO:0007669"/>
    <property type="project" value="UniProtKB-EC"/>
</dbReference>
<dbReference type="GO" id="GO:0004029">
    <property type="term" value="F:aldehyde dehydrogenase (NAD+) activity"/>
    <property type="evidence" value="ECO:0007669"/>
    <property type="project" value="EnsemblMetazoa"/>
</dbReference>
<dbReference type="GO" id="GO:0042803">
    <property type="term" value="F:protein homodimerization activity"/>
    <property type="evidence" value="ECO:0007669"/>
    <property type="project" value="EnsemblMetazoa"/>
</dbReference>
<dbReference type="GO" id="GO:0006117">
    <property type="term" value="P:acetaldehyde metabolic process"/>
    <property type="evidence" value="ECO:0007669"/>
    <property type="project" value="EnsemblMetazoa"/>
</dbReference>
<dbReference type="GO" id="GO:0019431">
    <property type="term" value="P:acetyl-CoA biosynthetic process from ethanol"/>
    <property type="evidence" value="ECO:0007669"/>
    <property type="project" value="EnsemblMetazoa"/>
</dbReference>
<dbReference type="GO" id="GO:0046164">
    <property type="term" value="P:alcohol catabolic process"/>
    <property type="evidence" value="ECO:0007669"/>
    <property type="project" value="EnsemblMetazoa"/>
</dbReference>
<dbReference type="GO" id="GO:0048149">
    <property type="term" value="P:behavioral response to ethanol"/>
    <property type="evidence" value="ECO:0007669"/>
    <property type="project" value="EnsemblMetazoa"/>
</dbReference>
<dbReference type="GO" id="GO:0006734">
    <property type="term" value="P:NADH metabolic process"/>
    <property type="evidence" value="ECO:0007669"/>
    <property type="project" value="EnsemblMetazoa"/>
</dbReference>
<dbReference type="CDD" id="cd05323">
    <property type="entry name" value="ADH_SDR_c_like"/>
    <property type="match status" value="1"/>
</dbReference>
<dbReference type="FunFam" id="3.40.50.720:FF:000302">
    <property type="entry name" value="Alcohol dehydrogenase"/>
    <property type="match status" value="1"/>
</dbReference>
<dbReference type="Gene3D" id="3.40.50.720">
    <property type="entry name" value="NAD(P)-binding Rossmann-like Domain"/>
    <property type="match status" value="1"/>
</dbReference>
<dbReference type="InterPro" id="IPR002425">
    <property type="entry name" value="ADH_Drosophila-type"/>
</dbReference>
<dbReference type="InterPro" id="IPR036291">
    <property type="entry name" value="NAD(P)-bd_dom_sf"/>
</dbReference>
<dbReference type="InterPro" id="IPR020904">
    <property type="entry name" value="Sc_DH/Rdtase_CS"/>
</dbReference>
<dbReference type="InterPro" id="IPR002347">
    <property type="entry name" value="SDR_fam"/>
</dbReference>
<dbReference type="PANTHER" id="PTHR42901">
    <property type="entry name" value="ALCOHOL DEHYDROGENASE"/>
    <property type="match status" value="1"/>
</dbReference>
<dbReference type="PANTHER" id="PTHR42901:SF1">
    <property type="entry name" value="ALCOHOL DEHYDROGENASE"/>
    <property type="match status" value="1"/>
</dbReference>
<dbReference type="Pfam" id="PF00106">
    <property type="entry name" value="adh_short"/>
    <property type="match status" value="1"/>
</dbReference>
<dbReference type="PRINTS" id="PR01168">
    <property type="entry name" value="ALCDHDRGNASE"/>
</dbReference>
<dbReference type="PRINTS" id="PR01167">
    <property type="entry name" value="INSADHFAMILY"/>
</dbReference>
<dbReference type="PRINTS" id="PR00080">
    <property type="entry name" value="SDRFAMILY"/>
</dbReference>
<dbReference type="SUPFAM" id="SSF51735">
    <property type="entry name" value="NAD(P)-binding Rossmann-fold domains"/>
    <property type="match status" value="1"/>
</dbReference>
<dbReference type="PROSITE" id="PS00061">
    <property type="entry name" value="ADH_SHORT"/>
    <property type="match status" value="1"/>
</dbReference>
<evidence type="ECO:0000250" key="1"/>
<evidence type="ECO:0000255" key="2">
    <source>
        <dbReference type="PROSITE-ProRule" id="PRU10001"/>
    </source>
</evidence>
<evidence type="ECO:0000305" key="3"/>
<protein>
    <recommendedName>
        <fullName>Alcohol dehydrogenase</fullName>
        <ecNumber>1.1.1.1</ecNumber>
    </recommendedName>
</protein>
<gene>
    <name type="primary">Adh</name>
    <name type="ORF">GM15656</name>
</gene>
<comment type="catalytic activity">
    <reaction evidence="2">
        <text>a primary alcohol + NAD(+) = an aldehyde + NADH + H(+)</text>
        <dbReference type="Rhea" id="RHEA:10736"/>
        <dbReference type="ChEBI" id="CHEBI:15378"/>
        <dbReference type="ChEBI" id="CHEBI:15734"/>
        <dbReference type="ChEBI" id="CHEBI:17478"/>
        <dbReference type="ChEBI" id="CHEBI:57540"/>
        <dbReference type="ChEBI" id="CHEBI:57945"/>
        <dbReference type="EC" id="1.1.1.1"/>
    </reaction>
</comment>
<comment type="catalytic activity">
    <reaction evidence="2">
        <text>a secondary alcohol + NAD(+) = a ketone + NADH + H(+)</text>
        <dbReference type="Rhea" id="RHEA:10740"/>
        <dbReference type="ChEBI" id="CHEBI:15378"/>
        <dbReference type="ChEBI" id="CHEBI:17087"/>
        <dbReference type="ChEBI" id="CHEBI:35681"/>
        <dbReference type="ChEBI" id="CHEBI:57540"/>
        <dbReference type="ChEBI" id="CHEBI:57945"/>
        <dbReference type="EC" id="1.1.1.1"/>
    </reaction>
</comment>
<comment type="subunit">
    <text>Homodimer.</text>
</comment>
<comment type="similarity">
    <text evidence="3">Belongs to the short-chain dehydrogenases/reductases (SDR) family.</text>
</comment>
<sequence length="256" mass="27745">MAFTLTNKNVIFVAGLGGIGLDTSKELLKRDLKNLVILDRIENPAAIAELKAINPKVTVTFYPYDVTVPIAETTKLLKTIFAKLKTVDVLINGAGILDDHQIERTIAVNYTGLVNTTTAILDFWDKRKGGPGGIICNIGSVTGFNAIYQVPVYSGTKAAVVNFTSSLAKLAPITGVTAYTVNPGITRTTLVHKFNSWLDVEPQVAEKLLAHPTQPSLACAENFVKAIELNQNGAIWKLDLGTLEAIQWTKHWDSGI</sequence>
<keyword id="KW-0520">NAD</keyword>
<keyword id="KW-0560">Oxidoreductase</keyword>
<keyword id="KW-1185">Reference proteome</keyword>
<reference key="1">
    <citation type="journal article" date="1985" name="Evolution">
        <title>Evolutionary genetics of two sibling species, Drosophila simulans and D. sechellia.</title>
        <authorList>
            <person name="Coyne J.A."/>
            <person name="Kreitman M."/>
        </authorList>
    </citation>
    <scope>NUCLEOTIDE SEQUENCE [GENOMIC DNA]</scope>
</reference>
<reference key="2">
    <citation type="journal article" date="2007" name="Nature">
        <title>Evolution of genes and genomes on the Drosophila phylogeny.</title>
        <authorList>
            <consortium name="Drosophila 12 genomes consortium"/>
        </authorList>
    </citation>
    <scope>NUCLEOTIDE SEQUENCE [LARGE SCALE GENOMIC DNA]</scope>
    <source>
        <strain>Rob3c / Tucson 14021-0248.25</strain>
    </source>
</reference>
<reference key="3">
    <citation type="journal article" date="2000" name="Genetics">
        <title>The population genetics of the origin and divergence of the Drosophila simulans complex species.</title>
        <authorList>
            <person name="Kliman R.M."/>
            <person name="Andolfatto P."/>
            <person name="Coyne J.A."/>
            <person name="Depaulis F."/>
            <person name="Kreitman M."/>
            <person name="Berry A.J."/>
            <person name="McCarter J."/>
            <person name="Wakeley J."/>
            <person name="Hey J."/>
        </authorList>
    </citation>
    <scope>NUCLEOTIDE SEQUENCE [GENOMIC DNA] OF 32-220</scope>
    <source>
        <strain>24</strain>
        <strain>SS77</strain>
    </source>
</reference>
<organism>
    <name type="scientific">Drosophila sechellia</name>
    <name type="common">Fruit fly</name>
    <dbReference type="NCBI Taxonomy" id="7238"/>
    <lineage>
        <taxon>Eukaryota</taxon>
        <taxon>Metazoa</taxon>
        <taxon>Ecdysozoa</taxon>
        <taxon>Arthropoda</taxon>
        <taxon>Hexapoda</taxon>
        <taxon>Insecta</taxon>
        <taxon>Pterygota</taxon>
        <taxon>Neoptera</taxon>
        <taxon>Endopterygota</taxon>
        <taxon>Diptera</taxon>
        <taxon>Brachycera</taxon>
        <taxon>Muscomorpha</taxon>
        <taxon>Ephydroidea</taxon>
        <taxon>Drosophilidae</taxon>
        <taxon>Drosophila</taxon>
        <taxon>Sophophora</taxon>
    </lineage>
</organism>
<name>ADH_DROSE</name>
<accession>Q9GN94</accession>
<accession>B4HXI2</accession>
<accession>P07163</accession>
<feature type="initiator methionine" description="Removed">
    <location>
        <position position="1"/>
    </location>
</feature>
<feature type="chain" id="PRO_0000054493" description="Alcohol dehydrogenase">
    <location>
        <begin position="2"/>
        <end position="256"/>
    </location>
</feature>
<feature type="active site" description="Proton acceptor" evidence="2">
    <location>
        <position position="153"/>
    </location>
</feature>
<feature type="binding site" evidence="1">
    <location>
        <begin position="12"/>
        <end position="35"/>
    </location>
    <ligand>
        <name>NAD(+)</name>
        <dbReference type="ChEBI" id="CHEBI:57540"/>
    </ligand>
</feature>
<feature type="binding site" evidence="1">
    <location>
        <position position="140"/>
    </location>
    <ligand>
        <name>substrate</name>
    </ligand>
</feature>
<proteinExistence type="inferred from homology"/>